<protein>
    <recommendedName>
        <fullName evidence="1">Large ribosomal subunit protein uL5</fullName>
    </recommendedName>
    <alternativeName>
        <fullName evidence="2">50S ribosomal protein L5</fullName>
    </alternativeName>
</protein>
<keyword id="KW-1185">Reference proteome</keyword>
<keyword id="KW-0687">Ribonucleoprotein</keyword>
<keyword id="KW-0689">Ribosomal protein</keyword>
<keyword id="KW-0694">RNA-binding</keyword>
<keyword id="KW-0699">rRNA-binding</keyword>
<keyword id="KW-0820">tRNA-binding</keyword>
<evidence type="ECO:0000255" key="1">
    <source>
        <dbReference type="HAMAP-Rule" id="MF_01333"/>
    </source>
</evidence>
<evidence type="ECO:0000305" key="2"/>
<name>RL5_METST</name>
<feature type="chain" id="PRO_0000243099" description="Large ribosomal subunit protein uL5">
    <location>
        <begin position="1"/>
        <end position="168"/>
    </location>
</feature>
<organism>
    <name type="scientific">Methanosphaera stadtmanae (strain ATCC 43021 / DSM 3091 / JCM 11832 / MCB-3)</name>
    <dbReference type="NCBI Taxonomy" id="339860"/>
    <lineage>
        <taxon>Archaea</taxon>
        <taxon>Methanobacteriati</taxon>
        <taxon>Methanobacteriota</taxon>
        <taxon>Methanomada group</taxon>
        <taxon>Methanobacteria</taxon>
        <taxon>Methanobacteriales</taxon>
        <taxon>Methanobacteriaceae</taxon>
        <taxon>Methanosphaera</taxon>
    </lineage>
</organism>
<sequence length="168" mass="19059">MNVMQKPFIAKATINIGVGEGGEKLTRAEKLIETLVDQKPVRTYSKVTNPEFGIRKKQPIACKVTLRGEKADKIISMVLSGLENRIKASQFDKEGNVSFGIREHIDIPGVKYDPDIGIFGMDVSVTFQKPGHRIKERRLRPKKLPQAQRVTKEESMEYMKENFNVTIE</sequence>
<comment type="function">
    <text evidence="1">This is one of the proteins that bind and probably mediate the attachment of the 5S RNA into the large ribosomal subunit, where it forms part of the central protuberance. In the 70S ribosome it contacts protein S13 of the 30S subunit (bridge B1b), connecting the 2 subunits; this bridge is implicated in subunit movement. May contact the P site tRNA; the 5S rRNA and some of its associated proteins might help stabilize positioning of ribosome-bound tRNAs.</text>
</comment>
<comment type="subunit">
    <text evidence="1">Part of the 50S ribosomal subunit; contacts the 5S rRNA and probably tRNA. Forms a bridge to the 30S subunit in the 70S ribosome.</text>
</comment>
<comment type="similarity">
    <text evidence="1">Belongs to the universal ribosomal protein uL5 family.</text>
</comment>
<proteinExistence type="inferred from homology"/>
<dbReference type="EMBL" id="CP000102">
    <property type="protein sequence ID" value="ABC57283.1"/>
    <property type="molecule type" value="Genomic_DNA"/>
</dbReference>
<dbReference type="RefSeq" id="WP_011406482.1">
    <property type="nucleotide sequence ID" value="NC_007681.1"/>
</dbReference>
<dbReference type="SMR" id="Q2NFX0"/>
<dbReference type="STRING" id="339860.Msp_0895"/>
<dbReference type="KEGG" id="mst:Msp_0895"/>
<dbReference type="eggNOG" id="arCOG04092">
    <property type="taxonomic scope" value="Archaea"/>
</dbReference>
<dbReference type="HOGENOM" id="CLU_061015_3_0_2"/>
<dbReference type="OrthoDB" id="372044at2157"/>
<dbReference type="Proteomes" id="UP000001931">
    <property type="component" value="Chromosome"/>
</dbReference>
<dbReference type="GO" id="GO:1990904">
    <property type="term" value="C:ribonucleoprotein complex"/>
    <property type="evidence" value="ECO:0007669"/>
    <property type="project" value="UniProtKB-KW"/>
</dbReference>
<dbReference type="GO" id="GO:0005840">
    <property type="term" value="C:ribosome"/>
    <property type="evidence" value="ECO:0007669"/>
    <property type="project" value="UniProtKB-KW"/>
</dbReference>
<dbReference type="GO" id="GO:0019843">
    <property type="term" value="F:rRNA binding"/>
    <property type="evidence" value="ECO:0007669"/>
    <property type="project" value="UniProtKB-UniRule"/>
</dbReference>
<dbReference type="GO" id="GO:0003735">
    <property type="term" value="F:structural constituent of ribosome"/>
    <property type="evidence" value="ECO:0007669"/>
    <property type="project" value="InterPro"/>
</dbReference>
<dbReference type="GO" id="GO:0000049">
    <property type="term" value="F:tRNA binding"/>
    <property type="evidence" value="ECO:0007669"/>
    <property type="project" value="UniProtKB-UniRule"/>
</dbReference>
<dbReference type="GO" id="GO:0006412">
    <property type="term" value="P:translation"/>
    <property type="evidence" value="ECO:0007669"/>
    <property type="project" value="UniProtKB-UniRule"/>
</dbReference>
<dbReference type="FunFam" id="3.30.1440.10:FF:000002">
    <property type="entry name" value="60S ribosomal protein L11"/>
    <property type="match status" value="1"/>
</dbReference>
<dbReference type="Gene3D" id="3.30.1440.10">
    <property type="match status" value="1"/>
</dbReference>
<dbReference type="HAMAP" id="MF_01333_A">
    <property type="entry name" value="Ribosomal_uL5_A"/>
    <property type="match status" value="1"/>
</dbReference>
<dbReference type="InterPro" id="IPR002132">
    <property type="entry name" value="Ribosomal_uL5"/>
</dbReference>
<dbReference type="InterPro" id="IPR022804">
    <property type="entry name" value="Ribosomal_uL5_arc"/>
</dbReference>
<dbReference type="InterPro" id="IPR031309">
    <property type="entry name" value="Ribosomal_uL5_C"/>
</dbReference>
<dbReference type="InterPro" id="IPR022803">
    <property type="entry name" value="Ribosomal_uL5_dom_sf"/>
</dbReference>
<dbReference type="InterPro" id="IPR031310">
    <property type="entry name" value="Ribosomal_uL5_N"/>
</dbReference>
<dbReference type="NCBIfam" id="NF003258">
    <property type="entry name" value="PRK04219.1"/>
    <property type="match status" value="1"/>
</dbReference>
<dbReference type="PANTHER" id="PTHR11994">
    <property type="entry name" value="60S RIBOSOMAL PROTEIN L11-RELATED"/>
    <property type="match status" value="1"/>
</dbReference>
<dbReference type="Pfam" id="PF00281">
    <property type="entry name" value="Ribosomal_L5"/>
    <property type="match status" value="1"/>
</dbReference>
<dbReference type="Pfam" id="PF00673">
    <property type="entry name" value="Ribosomal_L5_C"/>
    <property type="match status" value="1"/>
</dbReference>
<dbReference type="PIRSF" id="PIRSF002161">
    <property type="entry name" value="Ribosomal_L5"/>
    <property type="match status" value="1"/>
</dbReference>
<dbReference type="SUPFAM" id="SSF55282">
    <property type="entry name" value="RL5-like"/>
    <property type="match status" value="1"/>
</dbReference>
<reference key="1">
    <citation type="journal article" date="2006" name="J. Bacteriol.">
        <title>The genome sequence of Methanosphaera stadtmanae reveals why this human intestinal archaeon is restricted to methanol and H2 for methane formation and ATP synthesis.</title>
        <authorList>
            <person name="Fricke W.F."/>
            <person name="Seedorf H."/>
            <person name="Henne A."/>
            <person name="Kruer M."/>
            <person name="Liesegang H."/>
            <person name="Hedderich R."/>
            <person name="Gottschalk G."/>
            <person name="Thauer R.K."/>
        </authorList>
    </citation>
    <scope>NUCLEOTIDE SEQUENCE [LARGE SCALE GENOMIC DNA]</scope>
    <source>
        <strain>ATCC 43021 / DSM 3091 / JCM 11832 / MCB-3</strain>
    </source>
</reference>
<gene>
    <name evidence="1" type="primary">rpl5</name>
    <name type="ordered locus">Msp_0895</name>
</gene>
<accession>Q2NFX0</accession>